<keyword id="KW-0002">3D-structure</keyword>
<keyword id="KW-0007">Acetylation</keyword>
<keyword id="KW-0963">Cytoplasm</keyword>
<keyword id="KW-1017">Isopeptide bond</keyword>
<keyword id="KW-1185">Reference proteome</keyword>
<keyword id="KW-0687">Ribonucleoprotein</keyword>
<keyword id="KW-0689">Ribosomal protein</keyword>
<keyword id="KW-0694">RNA-binding</keyword>
<keyword id="KW-0699">rRNA-binding</keyword>
<keyword id="KW-0832">Ubl conjugation</keyword>
<protein>
    <recommendedName>
        <fullName evidence="2">Small ribosomal subunit protein uS13</fullName>
    </recommendedName>
    <alternativeName>
        <fullName>40S ribosomal protein S18</fullName>
    </alternativeName>
</protein>
<reference key="1">
    <citation type="submission" date="1997-02" db="EMBL/GenBank/DDBJ databases">
        <title>Cloning of the pig homolog of bacterial ribosomal protein S13.</title>
        <authorList>
            <person name="Kimura M."/>
            <person name="Kawakami K."/>
            <person name="Suzuki H."/>
            <person name="Hamasima N."/>
        </authorList>
    </citation>
    <scope>NUCLEOTIDE SEQUENCE [MRNA]</scope>
</reference>
<dbReference type="EMBL" id="AB000911">
    <property type="protein sequence ID" value="BAA19211.1"/>
    <property type="molecule type" value="mRNA"/>
</dbReference>
<dbReference type="RefSeq" id="NP_999105.1">
    <property type="nucleotide sequence ID" value="NM_213940.1"/>
</dbReference>
<dbReference type="PDB" id="3J7P">
    <property type="method" value="EM"/>
    <property type="resolution" value="3.50 A"/>
    <property type="chains" value="SS=1-152"/>
</dbReference>
<dbReference type="PDB" id="3J7R">
    <property type="method" value="EM"/>
    <property type="resolution" value="3.90 A"/>
    <property type="chains" value="SS=1-152"/>
</dbReference>
<dbReference type="PDBsum" id="3J7P"/>
<dbReference type="PDBsum" id="3J7R"/>
<dbReference type="SMR" id="P62272"/>
<dbReference type="FunCoup" id="P62272">
    <property type="interactions" value="1976"/>
</dbReference>
<dbReference type="STRING" id="9823.ENSSSCP00000001631"/>
<dbReference type="PaxDb" id="9823-ENSSSCP00000001631"/>
<dbReference type="PeptideAtlas" id="P62272"/>
<dbReference type="Ensembl" id="ENSSSCT00000001675.4">
    <property type="protein sequence ID" value="ENSSSCP00000001631.2"/>
    <property type="gene ID" value="ENSSSCG00000001502.5"/>
</dbReference>
<dbReference type="Ensembl" id="ENSSSCT00000084331.2">
    <property type="protein sequence ID" value="ENSSSCP00000067461.1"/>
    <property type="gene ID" value="ENSSSCG00000001502.5"/>
</dbReference>
<dbReference type="Ensembl" id="ENSSSCT00015043258.1">
    <property type="protein sequence ID" value="ENSSSCP00015017091.1"/>
    <property type="gene ID" value="ENSSSCG00015032681.1"/>
</dbReference>
<dbReference type="Ensembl" id="ENSSSCT00015043437.1">
    <property type="protein sequence ID" value="ENSSSCP00015017154.1"/>
    <property type="gene ID" value="ENSSSCG00015032681.1"/>
</dbReference>
<dbReference type="Ensembl" id="ENSSSCT00040102981.1">
    <property type="protein sequence ID" value="ENSSSCP00040046583.1"/>
    <property type="gene ID" value="ENSSSCG00040074457.1"/>
</dbReference>
<dbReference type="Ensembl" id="ENSSSCT00040103012.1">
    <property type="protein sequence ID" value="ENSSSCP00040046605.1"/>
    <property type="gene ID" value="ENSSSCG00040074457.1"/>
</dbReference>
<dbReference type="Ensembl" id="ENSSSCT00045014585.1">
    <property type="protein sequence ID" value="ENSSSCP00045010117.1"/>
    <property type="gene ID" value="ENSSSCG00045008633.1"/>
</dbReference>
<dbReference type="Ensembl" id="ENSSSCT00045014624.1">
    <property type="protein sequence ID" value="ENSSSCP00045010145.1"/>
    <property type="gene ID" value="ENSSSCG00045008633.1"/>
</dbReference>
<dbReference type="Ensembl" id="ENSSSCT00065064713.1">
    <property type="protein sequence ID" value="ENSSSCP00065028044.1"/>
    <property type="gene ID" value="ENSSSCG00065047309.1"/>
</dbReference>
<dbReference type="Ensembl" id="ENSSSCT00065064721.1">
    <property type="protein sequence ID" value="ENSSSCP00065028047.1"/>
    <property type="gene ID" value="ENSSSCG00065047309.1"/>
</dbReference>
<dbReference type="Ensembl" id="ENSSSCT00070017106.1">
    <property type="protein sequence ID" value="ENSSSCP00070014159.1"/>
    <property type="gene ID" value="ENSSSCG00070008759.1"/>
</dbReference>
<dbReference type="Ensembl" id="ENSSSCT00070017115.1">
    <property type="protein sequence ID" value="ENSSSCP00070014166.1"/>
    <property type="gene ID" value="ENSSSCG00070008759.1"/>
</dbReference>
<dbReference type="Ensembl" id="ENSSSCT00085037696">
    <property type="protein sequence ID" value="ENSSSCP00085026260"/>
    <property type="gene ID" value="ENSSSCG00085019721"/>
</dbReference>
<dbReference type="Ensembl" id="ENSSSCT00105025969">
    <property type="protein sequence ID" value="ENSSSCP00105018418"/>
    <property type="gene ID" value="ENSSSCG00105013317"/>
</dbReference>
<dbReference type="Ensembl" id="ENSSSCT00110063661">
    <property type="protein sequence ID" value="ENSSSCP00110044541"/>
    <property type="gene ID" value="ENSSSCG00110033401"/>
</dbReference>
<dbReference type="Ensembl" id="ENSSSCT00115015955">
    <property type="protein sequence ID" value="ENSSSCP00115015052"/>
    <property type="gene ID" value="ENSSSCG00115009210"/>
</dbReference>
<dbReference type="Ensembl" id="ENSSSCT00115015963">
    <property type="protein sequence ID" value="ENSSSCP00115015060"/>
    <property type="gene ID" value="ENSSSCG00115009210"/>
</dbReference>
<dbReference type="GeneID" id="396980"/>
<dbReference type="KEGG" id="ssc:396980"/>
<dbReference type="CTD" id="6222"/>
<dbReference type="VGNC" id="VGNC:109573">
    <property type="gene designation" value="RPS18"/>
</dbReference>
<dbReference type="eggNOG" id="KOG3311">
    <property type="taxonomic scope" value="Eukaryota"/>
</dbReference>
<dbReference type="GeneTree" id="ENSGT00390000012691"/>
<dbReference type="HOGENOM" id="CLU_103849_0_1_1"/>
<dbReference type="InParanoid" id="P62272"/>
<dbReference type="OMA" id="SYKGVRH"/>
<dbReference type="OrthoDB" id="1702480at2759"/>
<dbReference type="TreeFam" id="TF317649"/>
<dbReference type="Reactome" id="R-SSC-156827">
    <property type="pathway name" value="L13a-mediated translational silencing of Ceruloplasmin expression"/>
</dbReference>
<dbReference type="Reactome" id="R-SSC-1799339">
    <property type="pathway name" value="SRP-dependent cotranslational protein targeting to membrane"/>
</dbReference>
<dbReference type="Reactome" id="R-SSC-72649">
    <property type="pathway name" value="Translation initiation complex formation"/>
</dbReference>
<dbReference type="Reactome" id="R-SSC-72689">
    <property type="pathway name" value="Formation of a pool of free 40S subunits"/>
</dbReference>
<dbReference type="Reactome" id="R-SSC-72695">
    <property type="pathway name" value="Formation of the ternary complex, and subsequently, the 43S complex"/>
</dbReference>
<dbReference type="Reactome" id="R-SSC-72702">
    <property type="pathway name" value="Ribosomal scanning and start codon recognition"/>
</dbReference>
<dbReference type="Reactome" id="R-SSC-72706">
    <property type="pathway name" value="GTP hydrolysis and joining of the 60S ribosomal subunit"/>
</dbReference>
<dbReference type="Reactome" id="R-SSC-975956">
    <property type="pathway name" value="Nonsense Mediated Decay (NMD) independent of the Exon Junction Complex (EJC)"/>
</dbReference>
<dbReference type="Reactome" id="R-SSC-975957">
    <property type="pathway name" value="Nonsense Mediated Decay (NMD) enhanced by the Exon Junction Complex (EJC)"/>
</dbReference>
<dbReference type="Proteomes" id="UP000008227">
    <property type="component" value="Chromosome 7"/>
</dbReference>
<dbReference type="Proteomes" id="UP000314985">
    <property type="component" value="Chromosome 7"/>
</dbReference>
<dbReference type="Proteomes" id="UP000694570">
    <property type="component" value="Unplaced"/>
</dbReference>
<dbReference type="Proteomes" id="UP000694571">
    <property type="component" value="Unplaced"/>
</dbReference>
<dbReference type="Proteomes" id="UP000694720">
    <property type="component" value="Unplaced"/>
</dbReference>
<dbReference type="Proteomes" id="UP000694722">
    <property type="component" value="Unplaced"/>
</dbReference>
<dbReference type="Proteomes" id="UP000694723">
    <property type="component" value="Unplaced"/>
</dbReference>
<dbReference type="Proteomes" id="UP000694724">
    <property type="component" value="Unplaced"/>
</dbReference>
<dbReference type="Proteomes" id="UP000694725">
    <property type="component" value="Unplaced"/>
</dbReference>
<dbReference type="Proteomes" id="UP000694726">
    <property type="component" value="Unplaced"/>
</dbReference>
<dbReference type="Proteomes" id="UP000694727">
    <property type="component" value="Unplaced"/>
</dbReference>
<dbReference type="Proteomes" id="UP000694728">
    <property type="component" value="Unplaced"/>
</dbReference>
<dbReference type="Bgee" id="ENSSSCG00000001502">
    <property type="expression patterns" value="Expressed in hindlimb bud and 45 other cell types or tissues"/>
</dbReference>
<dbReference type="GO" id="GO:0098556">
    <property type="term" value="C:cytoplasmic side of rough endoplasmic reticulum membrane"/>
    <property type="evidence" value="ECO:0000314"/>
    <property type="project" value="UniProtKB"/>
</dbReference>
<dbReference type="GO" id="GO:0005829">
    <property type="term" value="C:cytosol"/>
    <property type="evidence" value="ECO:0000318"/>
    <property type="project" value="GO_Central"/>
</dbReference>
<dbReference type="GO" id="GO:0022627">
    <property type="term" value="C:cytosolic small ribosomal subunit"/>
    <property type="evidence" value="ECO:0000314"/>
    <property type="project" value="UniProtKB"/>
</dbReference>
<dbReference type="GO" id="GO:0005634">
    <property type="term" value="C:nucleus"/>
    <property type="evidence" value="ECO:0007669"/>
    <property type="project" value="Ensembl"/>
</dbReference>
<dbReference type="GO" id="GO:0014069">
    <property type="term" value="C:postsynaptic density"/>
    <property type="evidence" value="ECO:0007669"/>
    <property type="project" value="Ensembl"/>
</dbReference>
<dbReference type="GO" id="GO:0015935">
    <property type="term" value="C:small ribosomal subunit"/>
    <property type="evidence" value="ECO:0000250"/>
    <property type="project" value="AgBase"/>
</dbReference>
<dbReference type="GO" id="GO:0019843">
    <property type="term" value="F:rRNA binding"/>
    <property type="evidence" value="ECO:0007669"/>
    <property type="project" value="UniProtKB-KW"/>
</dbReference>
<dbReference type="GO" id="GO:0003735">
    <property type="term" value="F:structural constituent of ribosome"/>
    <property type="evidence" value="ECO:0007669"/>
    <property type="project" value="Ensembl"/>
</dbReference>
<dbReference type="GO" id="GO:0006412">
    <property type="term" value="P:translation"/>
    <property type="evidence" value="ECO:0007669"/>
    <property type="project" value="InterPro"/>
</dbReference>
<dbReference type="FunFam" id="1.10.8.50:FF:000002">
    <property type="entry name" value="40S ribosomal protein S18"/>
    <property type="match status" value="1"/>
</dbReference>
<dbReference type="FunFam" id="4.10.910.10:FF:000002">
    <property type="entry name" value="40S ribosomal protein S18"/>
    <property type="match status" value="1"/>
</dbReference>
<dbReference type="Gene3D" id="1.10.8.50">
    <property type="match status" value="1"/>
</dbReference>
<dbReference type="Gene3D" id="4.10.910.10">
    <property type="entry name" value="30s ribosomal protein s13, domain 2"/>
    <property type="match status" value="1"/>
</dbReference>
<dbReference type="HAMAP" id="MF_01315">
    <property type="entry name" value="Ribosomal_uS13"/>
    <property type="match status" value="1"/>
</dbReference>
<dbReference type="InterPro" id="IPR027437">
    <property type="entry name" value="Rbsml_uS13_C"/>
</dbReference>
<dbReference type="InterPro" id="IPR001892">
    <property type="entry name" value="Ribosomal_uS13"/>
</dbReference>
<dbReference type="InterPro" id="IPR010979">
    <property type="entry name" value="Ribosomal_uS13-like_H2TH"/>
</dbReference>
<dbReference type="InterPro" id="IPR018269">
    <property type="entry name" value="Ribosomal_uS13_CS"/>
</dbReference>
<dbReference type="NCBIfam" id="NF003140">
    <property type="entry name" value="PRK04053.1"/>
    <property type="match status" value="1"/>
</dbReference>
<dbReference type="PANTHER" id="PTHR10871">
    <property type="entry name" value="30S RIBOSOMAL PROTEIN S13/40S RIBOSOMAL PROTEIN S18"/>
    <property type="match status" value="1"/>
</dbReference>
<dbReference type="PANTHER" id="PTHR10871:SF42">
    <property type="entry name" value="SMALL RIBOSOMAL SUBUNIT PROTEIN US13"/>
    <property type="match status" value="1"/>
</dbReference>
<dbReference type="Pfam" id="PF00416">
    <property type="entry name" value="Ribosomal_S13"/>
    <property type="match status" value="1"/>
</dbReference>
<dbReference type="PIRSF" id="PIRSF002134">
    <property type="entry name" value="Ribosomal_S13"/>
    <property type="match status" value="1"/>
</dbReference>
<dbReference type="SUPFAM" id="SSF46946">
    <property type="entry name" value="S13-like H2TH domain"/>
    <property type="match status" value="1"/>
</dbReference>
<dbReference type="PROSITE" id="PS00646">
    <property type="entry name" value="RIBOSOMAL_S13_1"/>
    <property type="match status" value="1"/>
</dbReference>
<dbReference type="PROSITE" id="PS50159">
    <property type="entry name" value="RIBOSOMAL_S13_2"/>
    <property type="match status" value="1"/>
</dbReference>
<proteinExistence type="evidence at protein level"/>
<gene>
    <name type="primary">RPS18</name>
</gene>
<feature type="initiator methionine" description="Removed" evidence="1">
    <location>
        <position position="1"/>
    </location>
</feature>
<feature type="chain" id="PRO_0000132214" description="Small ribosomal subunit protein uS13">
    <location>
        <begin position="2"/>
        <end position="152"/>
    </location>
</feature>
<feature type="modified residue" description="N-acetylserine" evidence="1">
    <location>
        <position position="2"/>
    </location>
</feature>
<feature type="modified residue" description="N6-acetyllysine; alternate" evidence="1">
    <location>
        <position position="94"/>
    </location>
</feature>
<feature type="modified residue" description="N6-acetyllysine; alternate" evidence="1">
    <location>
        <position position="106"/>
    </location>
</feature>
<feature type="cross-link" description="Glycyl lysine isopeptide (Lys-Gly) (interchain with G-Cter in SUMO2)" evidence="1">
    <location>
        <position position="91"/>
    </location>
</feature>
<feature type="cross-link" description="Glycyl lysine isopeptide (Lys-Gly) (interchain with G-Cter in SUMO2); alternate" evidence="1">
    <location>
        <position position="94"/>
    </location>
</feature>
<feature type="cross-link" description="Glycyl lysine isopeptide (Lys-Gly) (interchain with G-Cter in SUMO2); alternate" evidence="1">
    <location>
        <position position="106"/>
    </location>
</feature>
<comment type="function">
    <text evidence="1">Component of the small ribosomal subunit. The ribosome is a large ribonucleoprotein complex responsible for the synthesis of proteins in the cell.</text>
</comment>
<comment type="subunit">
    <text evidence="1">Component of the small ribosomal subunit.</text>
</comment>
<comment type="subcellular location">
    <subcellularLocation>
        <location evidence="1">Cytoplasm</location>
    </subcellularLocation>
</comment>
<comment type="similarity">
    <text evidence="2">Belongs to the universal ribosomal protein uS13 family.</text>
</comment>
<name>RS18_PIG</name>
<organism>
    <name type="scientific">Sus scrofa</name>
    <name type="common">Pig</name>
    <dbReference type="NCBI Taxonomy" id="9823"/>
    <lineage>
        <taxon>Eukaryota</taxon>
        <taxon>Metazoa</taxon>
        <taxon>Chordata</taxon>
        <taxon>Craniata</taxon>
        <taxon>Vertebrata</taxon>
        <taxon>Euteleostomi</taxon>
        <taxon>Mammalia</taxon>
        <taxon>Eutheria</taxon>
        <taxon>Laurasiatheria</taxon>
        <taxon>Artiodactyla</taxon>
        <taxon>Suina</taxon>
        <taxon>Suidae</taxon>
        <taxon>Sus</taxon>
    </lineage>
</organism>
<sequence length="152" mass="17719">MSLVIPEKFQHILRVLNTNIDGRRKIAFAITAIKGVGRRYAHVVLRKADIDLTKRAGELTEDEVERVITIMQNPRQYKIPDWFLNRQKDVKDGKYSQVLANGLDNKLREDLERLKKIRAHRGLRHFWGLRVRGQHTKTTGRRGRTVGVSKKK</sequence>
<accession>P62272</accession>
<accession>P25232</accession>
<evidence type="ECO:0000250" key="1">
    <source>
        <dbReference type="UniProtKB" id="P62269"/>
    </source>
</evidence>
<evidence type="ECO:0000305" key="2"/>